<protein>
    <recommendedName>
        <fullName evidence="1">Enolase</fullName>
        <ecNumber evidence="1">4.2.1.11</ecNumber>
    </recommendedName>
    <alternativeName>
        <fullName evidence="1">2-phospho-D-glycerate hydro-lyase</fullName>
    </alternativeName>
    <alternativeName>
        <fullName evidence="1">2-phosphoglycerate dehydratase</fullName>
    </alternativeName>
</protein>
<evidence type="ECO:0000255" key="1">
    <source>
        <dbReference type="HAMAP-Rule" id="MF_00318"/>
    </source>
</evidence>
<dbReference type="EC" id="4.2.1.11" evidence="1"/>
<dbReference type="EMBL" id="CP000283">
    <property type="protein sequence ID" value="ABE40044.1"/>
    <property type="molecule type" value="Genomic_DNA"/>
</dbReference>
<dbReference type="SMR" id="Q136E5"/>
<dbReference type="STRING" id="316057.RPD_2816"/>
<dbReference type="KEGG" id="rpd:RPD_2816"/>
<dbReference type="eggNOG" id="COG0148">
    <property type="taxonomic scope" value="Bacteria"/>
</dbReference>
<dbReference type="HOGENOM" id="CLU_031223_2_1_5"/>
<dbReference type="BioCyc" id="RPAL316057:RPD_RS14145-MONOMER"/>
<dbReference type="UniPathway" id="UPA00109">
    <property type="reaction ID" value="UER00187"/>
</dbReference>
<dbReference type="Proteomes" id="UP000001818">
    <property type="component" value="Chromosome"/>
</dbReference>
<dbReference type="GO" id="GO:0009986">
    <property type="term" value="C:cell surface"/>
    <property type="evidence" value="ECO:0007669"/>
    <property type="project" value="UniProtKB-SubCell"/>
</dbReference>
<dbReference type="GO" id="GO:0005576">
    <property type="term" value="C:extracellular region"/>
    <property type="evidence" value="ECO:0007669"/>
    <property type="project" value="UniProtKB-SubCell"/>
</dbReference>
<dbReference type="GO" id="GO:0000015">
    <property type="term" value="C:phosphopyruvate hydratase complex"/>
    <property type="evidence" value="ECO:0007669"/>
    <property type="project" value="InterPro"/>
</dbReference>
<dbReference type="GO" id="GO:0000287">
    <property type="term" value="F:magnesium ion binding"/>
    <property type="evidence" value="ECO:0007669"/>
    <property type="project" value="UniProtKB-UniRule"/>
</dbReference>
<dbReference type="GO" id="GO:0004634">
    <property type="term" value="F:phosphopyruvate hydratase activity"/>
    <property type="evidence" value="ECO:0007669"/>
    <property type="project" value="UniProtKB-UniRule"/>
</dbReference>
<dbReference type="GO" id="GO:0006096">
    <property type="term" value="P:glycolytic process"/>
    <property type="evidence" value="ECO:0007669"/>
    <property type="project" value="UniProtKB-UniRule"/>
</dbReference>
<dbReference type="CDD" id="cd03313">
    <property type="entry name" value="enolase"/>
    <property type="match status" value="1"/>
</dbReference>
<dbReference type="FunFam" id="3.20.20.120:FF:000001">
    <property type="entry name" value="Enolase"/>
    <property type="match status" value="1"/>
</dbReference>
<dbReference type="FunFam" id="3.30.390.10:FF:000001">
    <property type="entry name" value="Enolase"/>
    <property type="match status" value="1"/>
</dbReference>
<dbReference type="Gene3D" id="3.20.20.120">
    <property type="entry name" value="Enolase-like C-terminal domain"/>
    <property type="match status" value="1"/>
</dbReference>
<dbReference type="Gene3D" id="3.30.390.10">
    <property type="entry name" value="Enolase-like, N-terminal domain"/>
    <property type="match status" value="1"/>
</dbReference>
<dbReference type="HAMAP" id="MF_00318">
    <property type="entry name" value="Enolase"/>
    <property type="match status" value="1"/>
</dbReference>
<dbReference type="InterPro" id="IPR000941">
    <property type="entry name" value="Enolase"/>
</dbReference>
<dbReference type="InterPro" id="IPR036849">
    <property type="entry name" value="Enolase-like_C_sf"/>
</dbReference>
<dbReference type="InterPro" id="IPR029017">
    <property type="entry name" value="Enolase-like_N"/>
</dbReference>
<dbReference type="InterPro" id="IPR020810">
    <property type="entry name" value="Enolase_C"/>
</dbReference>
<dbReference type="InterPro" id="IPR020809">
    <property type="entry name" value="Enolase_CS"/>
</dbReference>
<dbReference type="InterPro" id="IPR020811">
    <property type="entry name" value="Enolase_N"/>
</dbReference>
<dbReference type="NCBIfam" id="TIGR01060">
    <property type="entry name" value="eno"/>
    <property type="match status" value="1"/>
</dbReference>
<dbReference type="PANTHER" id="PTHR11902">
    <property type="entry name" value="ENOLASE"/>
    <property type="match status" value="1"/>
</dbReference>
<dbReference type="PANTHER" id="PTHR11902:SF1">
    <property type="entry name" value="ENOLASE"/>
    <property type="match status" value="1"/>
</dbReference>
<dbReference type="Pfam" id="PF00113">
    <property type="entry name" value="Enolase_C"/>
    <property type="match status" value="1"/>
</dbReference>
<dbReference type="Pfam" id="PF03952">
    <property type="entry name" value="Enolase_N"/>
    <property type="match status" value="1"/>
</dbReference>
<dbReference type="PIRSF" id="PIRSF001400">
    <property type="entry name" value="Enolase"/>
    <property type="match status" value="1"/>
</dbReference>
<dbReference type="PRINTS" id="PR00148">
    <property type="entry name" value="ENOLASE"/>
</dbReference>
<dbReference type="SFLD" id="SFLDF00002">
    <property type="entry name" value="enolase"/>
    <property type="match status" value="1"/>
</dbReference>
<dbReference type="SFLD" id="SFLDG00178">
    <property type="entry name" value="enolase"/>
    <property type="match status" value="1"/>
</dbReference>
<dbReference type="SMART" id="SM01192">
    <property type="entry name" value="Enolase_C"/>
    <property type="match status" value="1"/>
</dbReference>
<dbReference type="SMART" id="SM01193">
    <property type="entry name" value="Enolase_N"/>
    <property type="match status" value="1"/>
</dbReference>
<dbReference type="SUPFAM" id="SSF51604">
    <property type="entry name" value="Enolase C-terminal domain-like"/>
    <property type="match status" value="1"/>
</dbReference>
<dbReference type="SUPFAM" id="SSF54826">
    <property type="entry name" value="Enolase N-terminal domain-like"/>
    <property type="match status" value="1"/>
</dbReference>
<dbReference type="PROSITE" id="PS00164">
    <property type="entry name" value="ENOLASE"/>
    <property type="match status" value="1"/>
</dbReference>
<accession>Q136E5</accession>
<sequence>MTAIVDIIGREILDSRGNPTVEVDVVLEDGSVGRAAVPSGASTGAHEAVELRDGDKARYLGKGVLKAVEAVNGELFDALGGMDAEQQVQIDQTMIELDGTPNKGRLGANAILGVSLAVAKAAASSYDLPLYRYVGGTSARTLPVPMMNIINGGAHADNPIDFQEFMIMPVGAASFSEALRCGSEIFHTLKGELKKAGHNTNVGDEGGFAPNLPSADAALDFVMAAIGKAGYKAGEDVMIALDPASTEFFKNGKYVYEAEGRSLGPQEQAKYLADLVARYPIVSIEDGMAEDDIEGWKAITDLIGDKCQLVGDDLFVTNVTRLADGIKNGYANSILIKVNQIGTLTETLAAVEMAHKAGYTAVMSHRSGETEDSTIADLAVATNCGQIKTGSLARADRTAKYNQLLRIEQELGAQAHYAGKAALKAFR</sequence>
<keyword id="KW-0963">Cytoplasm</keyword>
<keyword id="KW-0324">Glycolysis</keyword>
<keyword id="KW-0456">Lyase</keyword>
<keyword id="KW-0460">Magnesium</keyword>
<keyword id="KW-0479">Metal-binding</keyword>
<keyword id="KW-0964">Secreted</keyword>
<name>ENO_RHOPS</name>
<feature type="chain" id="PRO_0000267092" description="Enolase">
    <location>
        <begin position="1"/>
        <end position="427"/>
    </location>
</feature>
<feature type="active site" description="Proton donor" evidence="1">
    <location>
        <position position="205"/>
    </location>
</feature>
<feature type="active site" description="Proton acceptor" evidence="1">
    <location>
        <position position="337"/>
    </location>
</feature>
<feature type="binding site" evidence="1">
    <location>
        <position position="163"/>
    </location>
    <ligand>
        <name>(2R)-2-phosphoglycerate</name>
        <dbReference type="ChEBI" id="CHEBI:58289"/>
    </ligand>
</feature>
<feature type="binding site" evidence="1">
    <location>
        <position position="242"/>
    </location>
    <ligand>
        <name>Mg(2+)</name>
        <dbReference type="ChEBI" id="CHEBI:18420"/>
    </ligand>
</feature>
<feature type="binding site" evidence="1">
    <location>
        <position position="285"/>
    </location>
    <ligand>
        <name>Mg(2+)</name>
        <dbReference type="ChEBI" id="CHEBI:18420"/>
    </ligand>
</feature>
<feature type="binding site" evidence="1">
    <location>
        <position position="312"/>
    </location>
    <ligand>
        <name>Mg(2+)</name>
        <dbReference type="ChEBI" id="CHEBI:18420"/>
    </ligand>
</feature>
<feature type="binding site" evidence="1">
    <location>
        <position position="337"/>
    </location>
    <ligand>
        <name>(2R)-2-phosphoglycerate</name>
        <dbReference type="ChEBI" id="CHEBI:58289"/>
    </ligand>
</feature>
<feature type="binding site" evidence="1">
    <location>
        <position position="366"/>
    </location>
    <ligand>
        <name>(2R)-2-phosphoglycerate</name>
        <dbReference type="ChEBI" id="CHEBI:58289"/>
    </ligand>
</feature>
<feature type="binding site" evidence="1">
    <location>
        <position position="367"/>
    </location>
    <ligand>
        <name>(2R)-2-phosphoglycerate</name>
        <dbReference type="ChEBI" id="CHEBI:58289"/>
    </ligand>
</feature>
<feature type="binding site" evidence="1">
    <location>
        <position position="388"/>
    </location>
    <ligand>
        <name>(2R)-2-phosphoglycerate</name>
        <dbReference type="ChEBI" id="CHEBI:58289"/>
    </ligand>
</feature>
<comment type="function">
    <text evidence="1">Catalyzes the reversible conversion of 2-phosphoglycerate (2-PG) into phosphoenolpyruvate (PEP). It is essential for the degradation of carbohydrates via glycolysis.</text>
</comment>
<comment type="catalytic activity">
    <reaction evidence="1">
        <text>(2R)-2-phosphoglycerate = phosphoenolpyruvate + H2O</text>
        <dbReference type="Rhea" id="RHEA:10164"/>
        <dbReference type="ChEBI" id="CHEBI:15377"/>
        <dbReference type="ChEBI" id="CHEBI:58289"/>
        <dbReference type="ChEBI" id="CHEBI:58702"/>
        <dbReference type="EC" id="4.2.1.11"/>
    </reaction>
</comment>
<comment type="cofactor">
    <cofactor evidence="1">
        <name>Mg(2+)</name>
        <dbReference type="ChEBI" id="CHEBI:18420"/>
    </cofactor>
    <text evidence="1">Binds a second Mg(2+) ion via substrate during catalysis.</text>
</comment>
<comment type="pathway">
    <text evidence="1">Carbohydrate degradation; glycolysis; pyruvate from D-glyceraldehyde 3-phosphate: step 4/5.</text>
</comment>
<comment type="subcellular location">
    <subcellularLocation>
        <location evidence="1">Cytoplasm</location>
    </subcellularLocation>
    <subcellularLocation>
        <location evidence="1">Secreted</location>
    </subcellularLocation>
    <subcellularLocation>
        <location evidence="1">Cell surface</location>
    </subcellularLocation>
    <text evidence="1">Fractions of enolase are present in both the cytoplasm and on the cell surface.</text>
</comment>
<comment type="similarity">
    <text evidence="1">Belongs to the enolase family.</text>
</comment>
<organism>
    <name type="scientific">Rhodopseudomonas palustris (strain BisB5)</name>
    <dbReference type="NCBI Taxonomy" id="316057"/>
    <lineage>
        <taxon>Bacteria</taxon>
        <taxon>Pseudomonadati</taxon>
        <taxon>Pseudomonadota</taxon>
        <taxon>Alphaproteobacteria</taxon>
        <taxon>Hyphomicrobiales</taxon>
        <taxon>Nitrobacteraceae</taxon>
        <taxon>Rhodopseudomonas</taxon>
    </lineage>
</organism>
<proteinExistence type="inferred from homology"/>
<gene>
    <name evidence="1" type="primary">eno</name>
    <name type="ordered locus">RPD_2816</name>
</gene>
<reference key="1">
    <citation type="submission" date="2006-03" db="EMBL/GenBank/DDBJ databases">
        <title>Complete sequence of Rhodopseudomonas palustris BisB5.</title>
        <authorList>
            <consortium name="US DOE Joint Genome Institute"/>
            <person name="Copeland A."/>
            <person name="Lucas S."/>
            <person name="Lapidus A."/>
            <person name="Barry K."/>
            <person name="Detter J.C."/>
            <person name="Glavina del Rio T."/>
            <person name="Hammon N."/>
            <person name="Israni S."/>
            <person name="Dalin E."/>
            <person name="Tice H."/>
            <person name="Pitluck S."/>
            <person name="Chain P."/>
            <person name="Malfatti S."/>
            <person name="Shin M."/>
            <person name="Vergez L."/>
            <person name="Schmutz J."/>
            <person name="Larimer F."/>
            <person name="Land M."/>
            <person name="Hauser L."/>
            <person name="Pelletier D.A."/>
            <person name="Kyrpides N."/>
            <person name="Lykidis A."/>
            <person name="Oda Y."/>
            <person name="Harwood C.S."/>
            <person name="Richardson P."/>
        </authorList>
    </citation>
    <scope>NUCLEOTIDE SEQUENCE [LARGE SCALE GENOMIC DNA]</scope>
    <source>
        <strain>BisB5</strain>
    </source>
</reference>